<proteinExistence type="predicted"/>
<name>YL412_MIMIV</name>
<accession>Q5UQK8</accession>
<dbReference type="EMBL" id="AY653733">
    <property type="protein sequence ID" value="AAV50681.1"/>
    <property type="molecule type" value="Genomic_DNA"/>
</dbReference>
<dbReference type="KEGG" id="vg:9925033"/>
<dbReference type="OrthoDB" id="12507at10239"/>
<dbReference type="Proteomes" id="UP000001134">
    <property type="component" value="Genome"/>
</dbReference>
<dbReference type="GO" id="GO:0008270">
    <property type="term" value="F:zinc ion binding"/>
    <property type="evidence" value="ECO:0007669"/>
    <property type="project" value="UniProtKB-KW"/>
</dbReference>
<dbReference type="InterPro" id="IPR000571">
    <property type="entry name" value="Znf_CCCH"/>
</dbReference>
<dbReference type="InterPro" id="IPR036855">
    <property type="entry name" value="Znf_CCCH_sf"/>
</dbReference>
<dbReference type="SUPFAM" id="SSF90229">
    <property type="entry name" value="CCCH zinc finger"/>
    <property type="match status" value="1"/>
</dbReference>
<dbReference type="PROSITE" id="PS50103">
    <property type="entry name" value="ZF_C3H1"/>
    <property type="match status" value="1"/>
</dbReference>
<sequence>MHNYTSDSDEEIKLEFTDNGKSYTKVYHIPYRTNHSNEKKLICFSIINGENCIYGPNCTYAHSLSEQIIEEDKKFIYRIILDENLMGFSSISESNEKGCINESNKNMSDRKIEEIYKKLLNLTHICEKCTSNKCTGGYNCRNGVFDSSLKICKNDLLTGECLNKLVNIKVDEIIVDKLNSNQTESFKSCQSYQGCINGHHLTLRNIIPYYKYVHQKENSRKYQYQSVRYIDIDQLGKLFCNNNVGSNTYCYQNESDDTESSTDEEISSWFRKDEFEFSDSDNTV</sequence>
<gene>
    <name type="ordered locus">MIMI_L412</name>
</gene>
<reference key="1">
    <citation type="journal article" date="2004" name="Science">
        <title>The 1.2-megabase genome sequence of Mimivirus.</title>
        <authorList>
            <person name="Raoult D."/>
            <person name="Audic S."/>
            <person name="Robert C."/>
            <person name="Abergel C."/>
            <person name="Renesto P."/>
            <person name="Ogata H."/>
            <person name="La Scola B."/>
            <person name="Susan M."/>
            <person name="Claverie J.-M."/>
        </authorList>
    </citation>
    <scope>NUCLEOTIDE SEQUENCE [LARGE SCALE GENOMIC DNA]</scope>
    <source>
        <strain>Rowbotham-Bradford</strain>
    </source>
</reference>
<feature type="chain" id="PRO_0000253251" description="Uncharacterized protein L412">
    <location>
        <begin position="1"/>
        <end position="284"/>
    </location>
</feature>
<feature type="zinc finger region" description="C3H1-type" evidence="1">
    <location>
        <begin position="37"/>
        <end position="65"/>
    </location>
</feature>
<evidence type="ECO:0000255" key="1">
    <source>
        <dbReference type="PROSITE-ProRule" id="PRU00723"/>
    </source>
</evidence>
<organismHost>
    <name type="scientific">Acanthamoeba polyphaga</name>
    <name type="common">Amoeba</name>
    <dbReference type="NCBI Taxonomy" id="5757"/>
</organismHost>
<protein>
    <recommendedName>
        <fullName>Uncharacterized protein L412</fullName>
    </recommendedName>
</protein>
<organism>
    <name type="scientific">Acanthamoeba polyphaga mimivirus</name>
    <name type="common">APMV</name>
    <dbReference type="NCBI Taxonomy" id="212035"/>
    <lineage>
        <taxon>Viruses</taxon>
        <taxon>Varidnaviria</taxon>
        <taxon>Bamfordvirae</taxon>
        <taxon>Nucleocytoviricota</taxon>
        <taxon>Megaviricetes</taxon>
        <taxon>Imitervirales</taxon>
        <taxon>Mimiviridae</taxon>
        <taxon>Megamimivirinae</taxon>
        <taxon>Mimivirus</taxon>
        <taxon>Mimivirus bradfordmassiliense</taxon>
    </lineage>
</organism>
<keyword id="KW-0479">Metal-binding</keyword>
<keyword id="KW-1185">Reference proteome</keyword>
<keyword id="KW-0862">Zinc</keyword>
<keyword id="KW-0863">Zinc-finger</keyword>